<gene>
    <name type="primary">ylcA</name>
    <name type="ordered locus">LL1097</name>
    <name type="ORF">L104681</name>
</gene>
<name>YLAC_LACLA</name>
<evidence type="ECO:0000255" key="1">
    <source>
        <dbReference type="HAMAP-Rule" id="MF_01103"/>
    </source>
</evidence>
<comment type="subcellular location">
    <subcellularLocation>
        <location evidence="1">Cytoplasm</location>
    </subcellularLocation>
</comment>
<comment type="similarity">
    <text evidence="1">Belongs to the UPF0291 family.</text>
</comment>
<keyword id="KW-0963">Cytoplasm</keyword>
<keyword id="KW-1185">Reference proteome</keyword>
<proteinExistence type="inferred from homology"/>
<accession>Q9CGJ9</accession>
<sequence length="80" mass="9216">MAITNEQVERINELARKKKAEGLSEAELEEQALLRRAYLDSVKANFRSQVETIKVIDEKTGEDVTPDKLKEIQRKNGMRD</sequence>
<protein>
    <recommendedName>
        <fullName evidence="1">UPF0291 protein YlaC</fullName>
    </recommendedName>
</protein>
<reference key="1">
    <citation type="journal article" date="2001" name="Genome Res.">
        <title>The complete genome sequence of the lactic acid bacterium Lactococcus lactis ssp. lactis IL1403.</title>
        <authorList>
            <person name="Bolotin A."/>
            <person name="Wincker P."/>
            <person name="Mauger S."/>
            <person name="Jaillon O."/>
            <person name="Malarme K."/>
            <person name="Weissenbach J."/>
            <person name="Ehrlich S.D."/>
            <person name="Sorokin A."/>
        </authorList>
    </citation>
    <scope>NUCLEOTIDE SEQUENCE [LARGE SCALE GENOMIC DNA]</scope>
    <source>
        <strain>IL1403</strain>
    </source>
</reference>
<feature type="chain" id="PRO_0000094974" description="UPF0291 protein YlaC">
    <location>
        <begin position="1"/>
        <end position="80"/>
    </location>
</feature>
<organism>
    <name type="scientific">Lactococcus lactis subsp. lactis (strain IL1403)</name>
    <name type="common">Streptococcus lactis</name>
    <dbReference type="NCBI Taxonomy" id="272623"/>
    <lineage>
        <taxon>Bacteria</taxon>
        <taxon>Bacillati</taxon>
        <taxon>Bacillota</taxon>
        <taxon>Bacilli</taxon>
        <taxon>Lactobacillales</taxon>
        <taxon>Streptococcaceae</taxon>
        <taxon>Lactococcus</taxon>
    </lineage>
</organism>
<dbReference type="EMBL" id="AE005176">
    <property type="protein sequence ID" value="AAK05195.1"/>
    <property type="molecule type" value="Genomic_DNA"/>
</dbReference>
<dbReference type="PIR" id="A86762">
    <property type="entry name" value="A86762"/>
</dbReference>
<dbReference type="RefSeq" id="NP_267253.1">
    <property type="nucleotide sequence ID" value="NC_002662.1"/>
</dbReference>
<dbReference type="RefSeq" id="WP_004255340.1">
    <property type="nucleotide sequence ID" value="NC_002662.1"/>
</dbReference>
<dbReference type="SMR" id="Q9CGJ9"/>
<dbReference type="PaxDb" id="272623-L104681"/>
<dbReference type="EnsemblBacteria" id="AAK05195">
    <property type="protein sequence ID" value="AAK05195"/>
    <property type="gene ID" value="L104681"/>
</dbReference>
<dbReference type="KEGG" id="lla:L104681"/>
<dbReference type="PATRIC" id="fig|272623.7.peg.1175"/>
<dbReference type="eggNOG" id="COG4224">
    <property type="taxonomic scope" value="Bacteria"/>
</dbReference>
<dbReference type="HOGENOM" id="CLU_173137_0_2_9"/>
<dbReference type="OrthoDB" id="390105at2"/>
<dbReference type="Proteomes" id="UP000002196">
    <property type="component" value="Chromosome"/>
</dbReference>
<dbReference type="GO" id="GO:0005737">
    <property type="term" value="C:cytoplasm"/>
    <property type="evidence" value="ECO:0007669"/>
    <property type="project" value="UniProtKB-SubCell"/>
</dbReference>
<dbReference type="Gene3D" id="1.10.287.540">
    <property type="entry name" value="Helix hairpin bin"/>
    <property type="match status" value="1"/>
</dbReference>
<dbReference type="HAMAP" id="MF_01103">
    <property type="entry name" value="UPF0291"/>
    <property type="match status" value="1"/>
</dbReference>
<dbReference type="InterPro" id="IPR009242">
    <property type="entry name" value="DUF896"/>
</dbReference>
<dbReference type="PANTHER" id="PTHR37300">
    <property type="entry name" value="UPF0291 PROTEIN CBO2609/CLC_2481"/>
    <property type="match status" value="1"/>
</dbReference>
<dbReference type="PANTHER" id="PTHR37300:SF1">
    <property type="entry name" value="UPF0291 PROTEIN YNZC"/>
    <property type="match status" value="1"/>
</dbReference>
<dbReference type="Pfam" id="PF05979">
    <property type="entry name" value="DUF896"/>
    <property type="match status" value="1"/>
</dbReference>
<dbReference type="SUPFAM" id="SSF158221">
    <property type="entry name" value="YnzC-like"/>
    <property type="match status" value="1"/>
</dbReference>